<feature type="chain" id="PRO_0000224701" description="UDP-N-acetylenolpyruvoylglucosamine reductase">
    <location>
        <begin position="1"/>
        <end position="302"/>
    </location>
</feature>
<feature type="domain" description="FAD-binding PCMH-type" evidence="1">
    <location>
        <begin position="31"/>
        <end position="210"/>
    </location>
</feature>
<feature type="active site" evidence="1">
    <location>
        <position position="175"/>
    </location>
</feature>
<feature type="active site" description="Proton donor" evidence="1">
    <location>
        <position position="224"/>
    </location>
</feature>
<feature type="active site" evidence="1">
    <location>
        <position position="297"/>
    </location>
</feature>
<dbReference type="EC" id="1.3.1.98" evidence="1"/>
<dbReference type="EMBL" id="CP000084">
    <property type="protein sequence ID" value="AAZ20847.1"/>
    <property type="molecule type" value="Genomic_DNA"/>
</dbReference>
<dbReference type="SMR" id="Q4FPK7"/>
<dbReference type="STRING" id="335992.SAR11_0022"/>
<dbReference type="KEGG" id="pub:SAR11_0022"/>
<dbReference type="eggNOG" id="COG0812">
    <property type="taxonomic scope" value="Bacteria"/>
</dbReference>
<dbReference type="HOGENOM" id="CLU_035304_1_0_5"/>
<dbReference type="UniPathway" id="UPA00219"/>
<dbReference type="Proteomes" id="UP000002528">
    <property type="component" value="Chromosome"/>
</dbReference>
<dbReference type="GO" id="GO:0005829">
    <property type="term" value="C:cytosol"/>
    <property type="evidence" value="ECO:0007669"/>
    <property type="project" value="TreeGrafter"/>
</dbReference>
<dbReference type="GO" id="GO:0071949">
    <property type="term" value="F:FAD binding"/>
    <property type="evidence" value="ECO:0007669"/>
    <property type="project" value="InterPro"/>
</dbReference>
<dbReference type="GO" id="GO:0008762">
    <property type="term" value="F:UDP-N-acetylmuramate dehydrogenase activity"/>
    <property type="evidence" value="ECO:0007669"/>
    <property type="project" value="UniProtKB-UniRule"/>
</dbReference>
<dbReference type="GO" id="GO:0051301">
    <property type="term" value="P:cell division"/>
    <property type="evidence" value="ECO:0007669"/>
    <property type="project" value="UniProtKB-KW"/>
</dbReference>
<dbReference type="GO" id="GO:0071555">
    <property type="term" value="P:cell wall organization"/>
    <property type="evidence" value="ECO:0007669"/>
    <property type="project" value="UniProtKB-KW"/>
</dbReference>
<dbReference type="GO" id="GO:0009252">
    <property type="term" value="P:peptidoglycan biosynthetic process"/>
    <property type="evidence" value="ECO:0007669"/>
    <property type="project" value="UniProtKB-UniRule"/>
</dbReference>
<dbReference type="GO" id="GO:0008360">
    <property type="term" value="P:regulation of cell shape"/>
    <property type="evidence" value="ECO:0007669"/>
    <property type="project" value="UniProtKB-KW"/>
</dbReference>
<dbReference type="Gene3D" id="3.30.465.10">
    <property type="match status" value="1"/>
</dbReference>
<dbReference type="Gene3D" id="3.90.78.10">
    <property type="entry name" value="UDP-N-acetylenolpyruvoylglucosamine reductase, C-terminal domain"/>
    <property type="match status" value="1"/>
</dbReference>
<dbReference type="Gene3D" id="3.30.43.10">
    <property type="entry name" value="Uridine Diphospho-n-acetylenolpyruvylglucosamine Reductase, domain 2"/>
    <property type="match status" value="1"/>
</dbReference>
<dbReference type="HAMAP" id="MF_00037">
    <property type="entry name" value="MurB"/>
    <property type="match status" value="1"/>
</dbReference>
<dbReference type="InterPro" id="IPR016166">
    <property type="entry name" value="FAD-bd_PCMH"/>
</dbReference>
<dbReference type="InterPro" id="IPR036318">
    <property type="entry name" value="FAD-bd_PCMH-like_sf"/>
</dbReference>
<dbReference type="InterPro" id="IPR016167">
    <property type="entry name" value="FAD-bd_PCMH_sub1"/>
</dbReference>
<dbReference type="InterPro" id="IPR016169">
    <property type="entry name" value="FAD-bd_PCMH_sub2"/>
</dbReference>
<dbReference type="InterPro" id="IPR003170">
    <property type="entry name" value="MurB"/>
</dbReference>
<dbReference type="InterPro" id="IPR011601">
    <property type="entry name" value="MurB_C"/>
</dbReference>
<dbReference type="InterPro" id="IPR036635">
    <property type="entry name" value="MurB_C_sf"/>
</dbReference>
<dbReference type="InterPro" id="IPR006094">
    <property type="entry name" value="Oxid_FAD_bind_N"/>
</dbReference>
<dbReference type="NCBIfam" id="TIGR00179">
    <property type="entry name" value="murB"/>
    <property type="match status" value="1"/>
</dbReference>
<dbReference type="NCBIfam" id="NF010480">
    <property type="entry name" value="PRK13905.1"/>
    <property type="match status" value="1"/>
</dbReference>
<dbReference type="PANTHER" id="PTHR21071">
    <property type="entry name" value="UDP-N-ACETYLENOLPYRUVOYLGLUCOSAMINE REDUCTASE"/>
    <property type="match status" value="1"/>
</dbReference>
<dbReference type="PANTHER" id="PTHR21071:SF4">
    <property type="entry name" value="UDP-N-ACETYLENOLPYRUVOYLGLUCOSAMINE REDUCTASE"/>
    <property type="match status" value="1"/>
</dbReference>
<dbReference type="Pfam" id="PF01565">
    <property type="entry name" value="FAD_binding_4"/>
    <property type="match status" value="1"/>
</dbReference>
<dbReference type="Pfam" id="PF02873">
    <property type="entry name" value="MurB_C"/>
    <property type="match status" value="1"/>
</dbReference>
<dbReference type="SUPFAM" id="SSF56176">
    <property type="entry name" value="FAD-binding/transporter-associated domain-like"/>
    <property type="match status" value="1"/>
</dbReference>
<dbReference type="SUPFAM" id="SSF56194">
    <property type="entry name" value="Uridine diphospho-N-Acetylenolpyruvylglucosamine reductase, MurB, C-terminal domain"/>
    <property type="match status" value="1"/>
</dbReference>
<dbReference type="PROSITE" id="PS51387">
    <property type="entry name" value="FAD_PCMH"/>
    <property type="match status" value="1"/>
</dbReference>
<proteinExistence type="inferred from homology"/>
<name>MURB_PELUB</name>
<accession>Q4FPK7</accession>
<organism>
    <name type="scientific">Pelagibacter ubique (strain HTCC1062)</name>
    <dbReference type="NCBI Taxonomy" id="335992"/>
    <lineage>
        <taxon>Bacteria</taxon>
        <taxon>Pseudomonadati</taxon>
        <taxon>Pseudomonadota</taxon>
        <taxon>Alphaproteobacteria</taxon>
        <taxon>Candidatus Pelagibacterales</taxon>
        <taxon>Candidatus Pelagibacteraceae</taxon>
        <taxon>Candidatus Pelagibacter</taxon>
    </lineage>
</organism>
<evidence type="ECO:0000255" key="1">
    <source>
        <dbReference type="HAMAP-Rule" id="MF_00037"/>
    </source>
</evidence>
<gene>
    <name evidence="1" type="primary">murB</name>
    <name type="ordered locus">SAR11_0022</name>
</gene>
<keyword id="KW-0131">Cell cycle</keyword>
<keyword id="KW-0132">Cell division</keyword>
<keyword id="KW-0133">Cell shape</keyword>
<keyword id="KW-0961">Cell wall biogenesis/degradation</keyword>
<keyword id="KW-0963">Cytoplasm</keyword>
<keyword id="KW-0274">FAD</keyword>
<keyword id="KW-0285">Flavoprotein</keyword>
<keyword id="KW-0521">NADP</keyword>
<keyword id="KW-0560">Oxidoreductase</keyword>
<keyword id="KW-0573">Peptidoglycan synthesis</keyword>
<keyword id="KW-1185">Reference proteome</keyword>
<reference key="1">
    <citation type="journal article" date="2005" name="Science">
        <title>Genome streamlining in a cosmopolitan oceanic bacterium.</title>
        <authorList>
            <person name="Giovannoni S.J."/>
            <person name="Tripp H.J."/>
            <person name="Givan S."/>
            <person name="Podar M."/>
            <person name="Vergin K.L."/>
            <person name="Baptista D."/>
            <person name="Bibbs L."/>
            <person name="Eads J."/>
            <person name="Richardson T.H."/>
            <person name="Noordewier M."/>
            <person name="Rappe M.S."/>
            <person name="Short J.M."/>
            <person name="Carrington J.C."/>
            <person name="Mathur E.J."/>
        </authorList>
    </citation>
    <scope>NUCLEOTIDE SEQUENCE [LARGE SCALE GENOMIC DNA]</scope>
    <source>
        <strain>HTCC1062</strain>
    </source>
</reference>
<protein>
    <recommendedName>
        <fullName evidence="1">UDP-N-acetylenolpyruvoylglucosamine reductase</fullName>
        <ecNumber evidence="1">1.3.1.98</ecNumber>
    </recommendedName>
    <alternativeName>
        <fullName evidence="1">UDP-N-acetylmuramate dehydrogenase</fullName>
    </alternativeName>
</protein>
<comment type="function">
    <text evidence="1">Cell wall formation.</text>
</comment>
<comment type="catalytic activity">
    <reaction evidence="1">
        <text>UDP-N-acetyl-alpha-D-muramate + NADP(+) = UDP-N-acetyl-3-O-(1-carboxyvinyl)-alpha-D-glucosamine + NADPH + H(+)</text>
        <dbReference type="Rhea" id="RHEA:12248"/>
        <dbReference type="ChEBI" id="CHEBI:15378"/>
        <dbReference type="ChEBI" id="CHEBI:57783"/>
        <dbReference type="ChEBI" id="CHEBI:58349"/>
        <dbReference type="ChEBI" id="CHEBI:68483"/>
        <dbReference type="ChEBI" id="CHEBI:70757"/>
        <dbReference type="EC" id="1.3.1.98"/>
    </reaction>
</comment>
<comment type="cofactor">
    <cofactor evidence="1">
        <name>FAD</name>
        <dbReference type="ChEBI" id="CHEBI:57692"/>
    </cofactor>
</comment>
<comment type="pathway">
    <text evidence="1">Cell wall biogenesis; peptidoglycan biosynthesis.</text>
</comment>
<comment type="subcellular location">
    <subcellularLocation>
        <location evidence="1">Cytoplasm</location>
    </subcellularLocation>
</comment>
<comment type="similarity">
    <text evidence="1">Belongs to the MurB family.</text>
</comment>
<sequence length="302" mass="33873">MSIEEIRKFSNEISSKINFDYDLKKSNWFNIGGQTKVYFRPDNLPDLILFLKKFGEKEKIHILGAGSNTLISDEKFDGVVIKLGKNFSNISILPNDVIIAGSACLDKKLSDFALNNGIGGFEFLACIPGTIGGGLKMNAGCFNKEFKDVLVSIQAIDKNGQVFTIPASKVIFKYRSNDLKEDLIFLSASFKGTKKNKEEIENEVLELKKKKDKAQPTKLKTSGSTFKNPIDQTDKKVWKLIKDSVPLDISFGDAHISNKHCNFFVNKNNASFEDMNKLIEFVKISVEKKTGIVLEKEIKILK</sequence>